<sequence length="239" mass="27256">MNPVRTLSATKAAFFSAYPRPINAAYRRVVEELLVELHLTTVNSAFVYDPFFALGLVTLYDSLMEAYHPPEQREAIFNALCKALHLKPEVLRKNARDLLELMRSGDPVQRYNLLCLKPEAEDVGGLKAILQRMTQPPYAYSRVLAVGLYTAYEAVATSLYKEPEERTRHFLEDVIGNLPFSPERVKKDLELYRSNLDRLKQARAIVEEMVKAARRQQERRQSTASLPETPAADRRESSG</sequence>
<dbReference type="EMBL" id="CP000239">
    <property type="protein sequence ID" value="ABD00316.1"/>
    <property type="molecule type" value="Genomic_DNA"/>
</dbReference>
<dbReference type="SMR" id="Q2JSQ3"/>
<dbReference type="STRING" id="321327.CYA_2176"/>
<dbReference type="KEGG" id="cya:CYA_2176"/>
<dbReference type="eggNOG" id="ENOG502Z86M">
    <property type="taxonomic scope" value="Bacteria"/>
</dbReference>
<dbReference type="HOGENOM" id="CLU_079763_1_0_3"/>
<dbReference type="Proteomes" id="UP000008818">
    <property type="component" value="Chromosome"/>
</dbReference>
<dbReference type="GO" id="GO:0030096">
    <property type="term" value="C:plasma membrane-derived thylakoid photosystem II"/>
    <property type="evidence" value="ECO:0007669"/>
    <property type="project" value="TreeGrafter"/>
</dbReference>
<dbReference type="GO" id="GO:0010207">
    <property type="term" value="P:photosystem II assembly"/>
    <property type="evidence" value="ECO:0007669"/>
    <property type="project" value="InterPro"/>
</dbReference>
<dbReference type="HAMAP" id="MF_01843">
    <property type="entry name" value="Thf1"/>
    <property type="match status" value="1"/>
</dbReference>
<dbReference type="InterPro" id="IPR017499">
    <property type="entry name" value="Thf1"/>
</dbReference>
<dbReference type="NCBIfam" id="TIGR03060">
    <property type="entry name" value="PS_II_psb29"/>
    <property type="match status" value="1"/>
</dbReference>
<dbReference type="PANTHER" id="PTHR34793">
    <property type="entry name" value="PROTEIN THYLAKOID FORMATION 1, CHLOROPLASTIC"/>
    <property type="match status" value="1"/>
</dbReference>
<dbReference type="PANTHER" id="PTHR34793:SF1">
    <property type="entry name" value="PROTEIN THYLAKOID FORMATION 1, CHLOROPLASTIC"/>
    <property type="match status" value="1"/>
</dbReference>
<dbReference type="Pfam" id="PF11264">
    <property type="entry name" value="ThylakoidFormat"/>
    <property type="match status" value="1"/>
</dbReference>
<keyword id="KW-0175">Coiled coil</keyword>
<evidence type="ECO:0000255" key="1">
    <source>
        <dbReference type="HAMAP-Rule" id="MF_01843"/>
    </source>
</evidence>
<evidence type="ECO:0000256" key="2">
    <source>
        <dbReference type="SAM" id="MobiDB-lite"/>
    </source>
</evidence>
<accession>Q2JSQ3</accession>
<gene>
    <name evidence="1" type="primary">thf1</name>
    <name type="ordered locus">CYA_2176</name>
</gene>
<feature type="chain" id="PRO_0000235219" description="Protein Thf1">
    <location>
        <begin position="1"/>
        <end position="239"/>
    </location>
</feature>
<feature type="region of interest" description="Disordered" evidence="2">
    <location>
        <begin position="211"/>
        <end position="239"/>
    </location>
</feature>
<feature type="coiled-coil region" evidence="1">
    <location>
        <begin position="183"/>
        <end position="219"/>
    </location>
</feature>
<feature type="compositionally biased region" description="Basic and acidic residues" evidence="2">
    <location>
        <begin position="211"/>
        <end position="221"/>
    </location>
</feature>
<organism>
    <name type="scientific">Synechococcus sp. (strain JA-3-3Ab)</name>
    <name type="common">Cyanobacteria bacterium Yellowstone A-Prime</name>
    <dbReference type="NCBI Taxonomy" id="321327"/>
    <lineage>
        <taxon>Bacteria</taxon>
        <taxon>Bacillati</taxon>
        <taxon>Cyanobacteriota</taxon>
        <taxon>Cyanophyceae</taxon>
        <taxon>Synechococcales</taxon>
        <taxon>Synechococcaceae</taxon>
        <taxon>Synechococcus</taxon>
    </lineage>
</organism>
<comment type="function">
    <text evidence="1">May be involved in photosynthetic membrane biogenesis.</text>
</comment>
<comment type="similarity">
    <text evidence="1">Belongs to the THF1 family.</text>
</comment>
<name>THF1_SYNJA</name>
<proteinExistence type="inferred from homology"/>
<protein>
    <recommendedName>
        <fullName evidence="1">Protein Thf1</fullName>
    </recommendedName>
</protein>
<reference key="1">
    <citation type="journal article" date="2007" name="ISME J.">
        <title>Population level functional diversity in a microbial community revealed by comparative genomic and metagenomic analyses.</title>
        <authorList>
            <person name="Bhaya D."/>
            <person name="Grossman A.R."/>
            <person name="Steunou A.-S."/>
            <person name="Khuri N."/>
            <person name="Cohan F.M."/>
            <person name="Hamamura N."/>
            <person name="Melendrez M.C."/>
            <person name="Bateson M.M."/>
            <person name="Ward D.M."/>
            <person name="Heidelberg J.F."/>
        </authorList>
    </citation>
    <scope>NUCLEOTIDE SEQUENCE [LARGE SCALE GENOMIC DNA]</scope>
    <source>
        <strain>JA-3-3Ab</strain>
    </source>
</reference>